<gene>
    <name type="ORF">SPBC609.01</name>
</gene>
<evidence type="ECO:0000255" key="1"/>
<evidence type="ECO:0000256" key="2">
    <source>
        <dbReference type="SAM" id="MobiDB-lite"/>
    </source>
</evidence>
<evidence type="ECO:0000269" key="3">
    <source>
    </source>
</evidence>
<evidence type="ECO:0000305" key="4"/>
<name>YBU1_SCHPO</name>
<sequence>MDPHWKRHDSSNIPTQPSPSASPKSNKPSSAQRFGNLPWVAPDVIQSQIEYLQALQMQQSLSESENYLQPNFFPFQSGPFSKSRRENTLLPRLNPLAPIGARQPNPSIPQQFSKPINESGTGTMGPAVGELTSPVMKNRAESIFSPVTESFEAFTQGMQTTPQRAGAGVSTATSHTRRRSSAGTDPFSPVSPSNPNFLTPLKPIDGNQEWQQSPLESPLSMHSLQESLHSVEPESPIFQQAPQIPLSNASQQSYINHSSDGASLPQSSFLNFNSSGKRVSVSAAAQQHKNLFLPYLPQASLPKFIGTGKLLVGTLHINRKNRSDAYVITDVLDEPIFICGSKDRNRTLEGDLVAVELLDVNEIMQTKREKEEKKIRRNLSLSGSSKYSVNSKAKMMSISTPMALGMNRGVLSFERSIEKRKNDYEVTGQSLSFVDDVSLTPDSAPKYAGHVVAVLNRPSGETCSGTLALYRPNSLALKNQSSHRRNSSTSSGETGKGPKIVWFKPSDKRIPLIAISSDQVPPTFFTNNDDFKDKVFLAGIKRWPTTSLHPFGTLYESIGTIGDPKVEYKAILHDFSCHTYDFPESLSHCVKRLPTPIPAEELQKRYNLRDKLTFMIGTRDYALHIDTGSIDGVITLGIHVADVAYYVKQDMPLDDEAANRVSEVQLLQGSVPFLPKKVSEEISLIEGHDCLTISIVVQLDLKSGAVLQCSLGPSVIHPSSFISLESAQANLQTNEALQLVDASAHVLTKLRLKTDKKLDLQSLYCFEFCDGQIPNIQNINMSIFEAFPIACSLQQIEHWVNEKVASHLMSVFPSKVILRKNQRPSDFASLVAVSELTGVNLSASSTPSEIMTEIATTKDKRTKMLLQLTLRRMCNESEYTIGTSNAKDVSHFVFSCPYYTHFCHPTRRYIDICVQRQLREAFDGRPDFSKDYRSLLSITQSCNTLSNFYRNAQEKSLHAYLCQLLHSINLRSGLVKHKAFVLAVDQEYIDIVIYEFGLERRISLDLLPLSNCDFNEQKHELYLSWRTNASFFYASSSLEIDTPCFNDFKKKFLDSNGMCKQICDMMDAQVRDLANAAESQESFYSKARGNDSTSKTAKSSSGNQDISGDGKLHSLRMKEPEVVQTIRPGQEVSVLIFADTSATYSLSLITLQSPLSS</sequence>
<keyword id="KW-0963">Cytoplasm</keyword>
<keyword id="KW-0378">Hydrolase</keyword>
<keyword id="KW-0540">Nuclease</keyword>
<keyword id="KW-1185">Reference proteome</keyword>
<dbReference type="EC" id="3.1.-.-"/>
<dbReference type="EMBL" id="CU329671">
    <property type="protein sequence ID" value="CAA22830.1"/>
    <property type="molecule type" value="Genomic_DNA"/>
</dbReference>
<dbReference type="PIR" id="T40572">
    <property type="entry name" value="T40572"/>
</dbReference>
<dbReference type="RefSeq" id="NP_596311.1">
    <property type="nucleotide sequence ID" value="NM_001022233.2"/>
</dbReference>
<dbReference type="SMR" id="O94525"/>
<dbReference type="BioGRID" id="277356">
    <property type="interactions" value="2"/>
</dbReference>
<dbReference type="FunCoup" id="O94525">
    <property type="interactions" value="3"/>
</dbReference>
<dbReference type="STRING" id="284812.O94525"/>
<dbReference type="iPTMnet" id="O94525"/>
<dbReference type="PaxDb" id="4896-SPBC609.01.1"/>
<dbReference type="EnsemblFungi" id="SPBC609.01.1">
    <property type="protein sequence ID" value="SPBC609.01.1:pep"/>
    <property type="gene ID" value="SPBC609.01"/>
</dbReference>
<dbReference type="KEGG" id="spo:2540838"/>
<dbReference type="PomBase" id="SPBC609.01"/>
<dbReference type="VEuPathDB" id="FungiDB:SPBC609.01"/>
<dbReference type="eggNOG" id="KOG2102">
    <property type="taxonomic scope" value="Eukaryota"/>
</dbReference>
<dbReference type="HOGENOM" id="CLU_278744_0_0_1"/>
<dbReference type="InParanoid" id="O94525"/>
<dbReference type="OMA" id="YTHFCHP"/>
<dbReference type="PhylomeDB" id="O94525"/>
<dbReference type="PRO" id="PR:O94525"/>
<dbReference type="Proteomes" id="UP000002485">
    <property type="component" value="Chromosome II"/>
</dbReference>
<dbReference type="GO" id="GO:0005737">
    <property type="term" value="C:cytoplasm"/>
    <property type="evidence" value="ECO:0007005"/>
    <property type="project" value="PomBase"/>
</dbReference>
<dbReference type="GO" id="GO:0005829">
    <property type="term" value="C:cytosol"/>
    <property type="evidence" value="ECO:0007005"/>
    <property type="project" value="PomBase"/>
</dbReference>
<dbReference type="GO" id="GO:0000932">
    <property type="term" value="C:P-body"/>
    <property type="evidence" value="ECO:0000318"/>
    <property type="project" value="GO_Central"/>
</dbReference>
<dbReference type="GO" id="GO:0000175">
    <property type="term" value="F:3'-5'-RNA exonuclease activity"/>
    <property type="evidence" value="ECO:0000318"/>
    <property type="project" value="GO_Central"/>
</dbReference>
<dbReference type="GO" id="GO:0003723">
    <property type="term" value="F:RNA binding"/>
    <property type="evidence" value="ECO:0000255"/>
    <property type="project" value="PomBase"/>
</dbReference>
<dbReference type="GO" id="GO:0006402">
    <property type="term" value="P:mRNA catabolic process"/>
    <property type="evidence" value="ECO:0000318"/>
    <property type="project" value="GO_Central"/>
</dbReference>
<dbReference type="GO" id="GO:0000956">
    <property type="term" value="P:nuclear-transcribed mRNA catabolic process"/>
    <property type="evidence" value="ECO:0000266"/>
    <property type="project" value="PomBase"/>
</dbReference>
<dbReference type="FunFam" id="2.40.50.700:FF:000002">
    <property type="entry name" value="Cell wall biogenesis protein"/>
    <property type="match status" value="1"/>
</dbReference>
<dbReference type="Gene3D" id="2.40.50.690">
    <property type="match status" value="1"/>
</dbReference>
<dbReference type="Gene3D" id="2.40.50.700">
    <property type="match status" value="1"/>
</dbReference>
<dbReference type="Gene3D" id="2.40.50.140">
    <property type="entry name" value="Nucleic acid-binding proteins"/>
    <property type="match status" value="1"/>
</dbReference>
<dbReference type="InterPro" id="IPR041505">
    <property type="entry name" value="Dis3_CSD2"/>
</dbReference>
<dbReference type="InterPro" id="IPR041093">
    <property type="entry name" value="Dis3l2-like_C"/>
</dbReference>
<dbReference type="InterPro" id="IPR012340">
    <property type="entry name" value="NA-bd_OB-fold"/>
</dbReference>
<dbReference type="InterPro" id="IPR001900">
    <property type="entry name" value="RNase_II/R"/>
</dbReference>
<dbReference type="InterPro" id="IPR050180">
    <property type="entry name" value="RNR_Ribonuclease"/>
</dbReference>
<dbReference type="PANTHER" id="PTHR23355:SF9">
    <property type="entry name" value="DIS3-LIKE EXONUCLEASE 2"/>
    <property type="match status" value="1"/>
</dbReference>
<dbReference type="PANTHER" id="PTHR23355">
    <property type="entry name" value="RIBONUCLEASE"/>
    <property type="match status" value="1"/>
</dbReference>
<dbReference type="Pfam" id="PF17877">
    <property type="entry name" value="Dis3l2_C_term"/>
    <property type="match status" value="1"/>
</dbReference>
<dbReference type="Pfam" id="PF17849">
    <property type="entry name" value="OB_Dis3"/>
    <property type="match status" value="1"/>
</dbReference>
<dbReference type="Pfam" id="PF00773">
    <property type="entry name" value="RNB"/>
    <property type="match status" value="1"/>
</dbReference>
<dbReference type="SMART" id="SM00955">
    <property type="entry name" value="RNB"/>
    <property type="match status" value="1"/>
</dbReference>
<dbReference type="SUPFAM" id="SSF50249">
    <property type="entry name" value="Nucleic acid-binding proteins"/>
    <property type="match status" value="2"/>
</dbReference>
<organism>
    <name type="scientific">Schizosaccharomyces pombe (strain 972 / ATCC 24843)</name>
    <name type="common">Fission yeast</name>
    <dbReference type="NCBI Taxonomy" id="284812"/>
    <lineage>
        <taxon>Eukaryota</taxon>
        <taxon>Fungi</taxon>
        <taxon>Dikarya</taxon>
        <taxon>Ascomycota</taxon>
        <taxon>Taphrinomycotina</taxon>
        <taxon>Schizosaccharomycetes</taxon>
        <taxon>Schizosaccharomycetales</taxon>
        <taxon>Schizosaccharomycetaceae</taxon>
        <taxon>Schizosaccharomyces</taxon>
    </lineage>
</organism>
<comment type="subcellular location">
    <subcellularLocation>
        <location evidence="3">Cytoplasm</location>
    </subcellularLocation>
</comment>
<comment type="similarity">
    <text evidence="4">Belongs to the RNR ribonuclease family.</text>
</comment>
<reference key="1">
    <citation type="journal article" date="2002" name="Nature">
        <title>The genome sequence of Schizosaccharomyces pombe.</title>
        <authorList>
            <person name="Wood V."/>
            <person name="Gwilliam R."/>
            <person name="Rajandream M.A."/>
            <person name="Lyne M.H."/>
            <person name="Lyne R."/>
            <person name="Stewart A."/>
            <person name="Sgouros J.G."/>
            <person name="Peat N."/>
            <person name="Hayles J."/>
            <person name="Baker S.G."/>
            <person name="Basham D."/>
            <person name="Bowman S."/>
            <person name="Brooks K."/>
            <person name="Brown D."/>
            <person name="Brown S."/>
            <person name="Chillingworth T."/>
            <person name="Churcher C.M."/>
            <person name="Collins M."/>
            <person name="Connor R."/>
            <person name="Cronin A."/>
            <person name="Davis P."/>
            <person name="Feltwell T."/>
            <person name="Fraser A."/>
            <person name="Gentles S."/>
            <person name="Goble A."/>
            <person name="Hamlin N."/>
            <person name="Harris D.E."/>
            <person name="Hidalgo J."/>
            <person name="Hodgson G."/>
            <person name="Holroyd S."/>
            <person name="Hornsby T."/>
            <person name="Howarth S."/>
            <person name="Huckle E.J."/>
            <person name="Hunt S."/>
            <person name="Jagels K."/>
            <person name="James K.D."/>
            <person name="Jones L."/>
            <person name="Jones M."/>
            <person name="Leather S."/>
            <person name="McDonald S."/>
            <person name="McLean J."/>
            <person name="Mooney P."/>
            <person name="Moule S."/>
            <person name="Mungall K.L."/>
            <person name="Murphy L.D."/>
            <person name="Niblett D."/>
            <person name="Odell C."/>
            <person name="Oliver K."/>
            <person name="O'Neil S."/>
            <person name="Pearson D."/>
            <person name="Quail M.A."/>
            <person name="Rabbinowitsch E."/>
            <person name="Rutherford K.M."/>
            <person name="Rutter S."/>
            <person name="Saunders D."/>
            <person name="Seeger K."/>
            <person name="Sharp S."/>
            <person name="Skelton J."/>
            <person name="Simmonds M.N."/>
            <person name="Squares R."/>
            <person name="Squares S."/>
            <person name="Stevens K."/>
            <person name="Taylor K."/>
            <person name="Taylor R.G."/>
            <person name="Tivey A."/>
            <person name="Walsh S.V."/>
            <person name="Warren T."/>
            <person name="Whitehead S."/>
            <person name="Woodward J.R."/>
            <person name="Volckaert G."/>
            <person name="Aert R."/>
            <person name="Robben J."/>
            <person name="Grymonprez B."/>
            <person name="Weltjens I."/>
            <person name="Vanstreels E."/>
            <person name="Rieger M."/>
            <person name="Schaefer M."/>
            <person name="Mueller-Auer S."/>
            <person name="Gabel C."/>
            <person name="Fuchs M."/>
            <person name="Duesterhoeft A."/>
            <person name="Fritzc C."/>
            <person name="Holzer E."/>
            <person name="Moestl D."/>
            <person name="Hilbert H."/>
            <person name="Borzym K."/>
            <person name="Langer I."/>
            <person name="Beck A."/>
            <person name="Lehrach H."/>
            <person name="Reinhardt R."/>
            <person name="Pohl T.M."/>
            <person name="Eger P."/>
            <person name="Zimmermann W."/>
            <person name="Wedler H."/>
            <person name="Wambutt R."/>
            <person name="Purnelle B."/>
            <person name="Goffeau A."/>
            <person name="Cadieu E."/>
            <person name="Dreano S."/>
            <person name="Gloux S."/>
            <person name="Lelaure V."/>
            <person name="Mottier S."/>
            <person name="Galibert F."/>
            <person name="Aves S.J."/>
            <person name="Xiang Z."/>
            <person name="Hunt C."/>
            <person name="Moore K."/>
            <person name="Hurst S.M."/>
            <person name="Lucas M."/>
            <person name="Rochet M."/>
            <person name="Gaillardin C."/>
            <person name="Tallada V.A."/>
            <person name="Garzon A."/>
            <person name="Thode G."/>
            <person name="Daga R.R."/>
            <person name="Cruzado L."/>
            <person name="Jimenez J."/>
            <person name="Sanchez M."/>
            <person name="del Rey F."/>
            <person name="Benito J."/>
            <person name="Dominguez A."/>
            <person name="Revuelta J.L."/>
            <person name="Moreno S."/>
            <person name="Armstrong J."/>
            <person name="Forsburg S.L."/>
            <person name="Cerutti L."/>
            <person name="Lowe T."/>
            <person name="McCombie W.R."/>
            <person name="Paulsen I."/>
            <person name="Potashkin J."/>
            <person name="Shpakovski G.V."/>
            <person name="Ussery D."/>
            <person name="Barrell B.G."/>
            <person name="Nurse P."/>
        </authorList>
    </citation>
    <scope>NUCLEOTIDE SEQUENCE [LARGE SCALE GENOMIC DNA]</scope>
    <source>
        <strain>972 / ATCC 24843</strain>
    </source>
</reference>
<reference key="2">
    <citation type="journal article" date="2006" name="Nat. Biotechnol.">
        <title>ORFeome cloning and global analysis of protein localization in the fission yeast Schizosaccharomyces pombe.</title>
        <authorList>
            <person name="Matsuyama A."/>
            <person name="Arai R."/>
            <person name="Yashiroda Y."/>
            <person name="Shirai A."/>
            <person name="Kamata A."/>
            <person name="Sekido S."/>
            <person name="Kobayashi Y."/>
            <person name="Hashimoto A."/>
            <person name="Hamamoto M."/>
            <person name="Hiraoka Y."/>
            <person name="Horinouchi S."/>
            <person name="Yoshida M."/>
        </authorList>
    </citation>
    <scope>SUBCELLULAR LOCATION [LARGE SCALE ANALYSIS]</scope>
</reference>
<feature type="chain" id="PRO_0000314758" description="Uncharacterized ribonuclease C609.01">
    <location>
        <begin position="1"/>
        <end position="1157"/>
    </location>
</feature>
<feature type="domain" description="CSD2" evidence="1">
    <location>
        <begin position="501"/>
        <end position="574"/>
    </location>
</feature>
<feature type="domain" description="RNB" evidence="1">
    <location>
        <begin position="608"/>
        <end position="921"/>
    </location>
</feature>
<feature type="domain" description="DIS3L2 C-terminal" evidence="1">
    <location>
        <begin position="973"/>
        <end position="1030"/>
    </location>
</feature>
<feature type="region of interest" description="Disordered" evidence="2">
    <location>
        <begin position="1"/>
        <end position="35"/>
    </location>
</feature>
<feature type="region of interest" description="Disordered" evidence="2">
    <location>
        <begin position="159"/>
        <end position="233"/>
    </location>
</feature>
<feature type="region of interest" description="Disordered" evidence="2">
    <location>
        <begin position="478"/>
        <end position="498"/>
    </location>
</feature>
<feature type="region of interest" description="Disordered" evidence="2">
    <location>
        <begin position="1084"/>
        <end position="1113"/>
    </location>
</feature>
<feature type="compositionally biased region" description="Basic and acidic residues" evidence="2">
    <location>
        <begin position="1"/>
        <end position="10"/>
    </location>
</feature>
<feature type="compositionally biased region" description="Low complexity" evidence="2">
    <location>
        <begin position="18"/>
        <end position="31"/>
    </location>
</feature>
<feature type="compositionally biased region" description="Low complexity" evidence="2">
    <location>
        <begin position="181"/>
        <end position="197"/>
    </location>
</feature>
<feature type="compositionally biased region" description="Polar residues" evidence="2">
    <location>
        <begin position="208"/>
        <end position="228"/>
    </location>
</feature>
<feature type="compositionally biased region" description="Polar residues" evidence="2">
    <location>
        <begin position="1090"/>
        <end position="1106"/>
    </location>
</feature>
<protein>
    <recommendedName>
        <fullName>Uncharacterized ribonuclease C609.01</fullName>
        <ecNumber>3.1.-.-</ecNumber>
    </recommendedName>
</protein>
<accession>O94525</accession>
<proteinExistence type="inferred from homology"/>